<reference key="1">
    <citation type="journal article" date="1997" name="Nature">
        <title>The nucleotide sequence of Saccharomyces cerevisiae chromosome XIII.</title>
        <authorList>
            <person name="Bowman S."/>
            <person name="Churcher C.M."/>
            <person name="Badcock K."/>
            <person name="Brown D."/>
            <person name="Chillingworth T."/>
            <person name="Connor R."/>
            <person name="Dedman K."/>
            <person name="Devlin K."/>
            <person name="Gentles S."/>
            <person name="Hamlin N."/>
            <person name="Hunt S."/>
            <person name="Jagels K."/>
            <person name="Lye G."/>
            <person name="Moule S."/>
            <person name="Odell C."/>
            <person name="Pearson D."/>
            <person name="Rajandream M.A."/>
            <person name="Rice P."/>
            <person name="Skelton J."/>
            <person name="Walsh S.V."/>
            <person name="Whitehead S."/>
            <person name="Barrell B.G."/>
        </authorList>
    </citation>
    <scope>NUCLEOTIDE SEQUENCE [LARGE SCALE GENOMIC DNA]</scope>
    <source>
        <strain>ATCC 204508 / S288c</strain>
    </source>
</reference>
<reference key="2">
    <citation type="journal article" date="2014" name="G3 (Bethesda)">
        <title>The reference genome sequence of Saccharomyces cerevisiae: Then and now.</title>
        <authorList>
            <person name="Engel S.R."/>
            <person name="Dietrich F.S."/>
            <person name="Fisk D.G."/>
            <person name="Binkley G."/>
            <person name="Balakrishnan R."/>
            <person name="Costanzo M.C."/>
            <person name="Dwight S.S."/>
            <person name="Hitz B.C."/>
            <person name="Karra K."/>
            <person name="Nash R.S."/>
            <person name="Weng S."/>
            <person name="Wong E.D."/>
            <person name="Lloyd P."/>
            <person name="Skrzypek M.S."/>
            <person name="Miyasato S.R."/>
            <person name="Simison M."/>
            <person name="Cherry J.M."/>
        </authorList>
    </citation>
    <scope>GENOME REANNOTATION</scope>
    <source>
        <strain>ATCC 204508 / S288c</strain>
    </source>
</reference>
<feature type="chain" id="PRO_0000203341" description="Uncharacterized protein YMR254C">
    <location>
        <begin position="1"/>
        <end position="102"/>
    </location>
</feature>
<feature type="transmembrane region" description="Helical" evidence="1">
    <location>
        <begin position="1"/>
        <end position="21"/>
    </location>
</feature>
<feature type="transmembrane region" description="Helical" evidence="1">
    <location>
        <begin position="42"/>
        <end position="62"/>
    </location>
</feature>
<feature type="transmembrane region" description="Helical" evidence="1">
    <location>
        <begin position="68"/>
        <end position="88"/>
    </location>
</feature>
<sequence length="102" mass="11816">MVPLILLILLFSKFSTFLRPVNHVLVTKYTAIVNTKWQTTPSIIDVTYTMHVFYMTIILILVRKQMQSIHAFLGSLCLPSHVLDFSIVRDILSWYFLETVAV</sequence>
<comment type="subcellular location">
    <subcellularLocation>
        <location evidence="2">Membrane</location>
        <topology evidence="2">Multi-pass membrane protein</topology>
    </subcellularLocation>
</comment>
<gene>
    <name type="ordered locus">YMR254C</name>
    <name type="ORF">YM9920.08C</name>
</gene>
<accession>Q04838</accession>
<accession>A0A1S0T0B2</accession>
<name>YM88_YEAST</name>
<keyword id="KW-0472">Membrane</keyword>
<keyword id="KW-1185">Reference proteome</keyword>
<keyword id="KW-0812">Transmembrane</keyword>
<keyword id="KW-1133">Transmembrane helix</keyword>
<evidence type="ECO:0000255" key="1"/>
<evidence type="ECO:0000305" key="2"/>
<protein>
    <recommendedName>
        <fullName>Uncharacterized protein YMR254C</fullName>
    </recommendedName>
</protein>
<proteinExistence type="predicted"/>
<dbReference type="EMBL" id="Z48639">
    <property type="protein sequence ID" value="CAA88581.1"/>
    <property type="molecule type" value="Genomic_DNA"/>
</dbReference>
<dbReference type="EMBL" id="BK006946">
    <property type="protein sequence ID" value="DAA80329.1"/>
    <property type="molecule type" value="Genomic_DNA"/>
</dbReference>
<dbReference type="PIR" id="S53076">
    <property type="entry name" value="S53076"/>
</dbReference>
<dbReference type="RefSeq" id="NP_001335809.1">
    <property type="nucleotide sequence ID" value="NM_001348870.1"/>
</dbReference>
<dbReference type="SMR" id="Q04838"/>
<dbReference type="FunCoup" id="Q04838">
    <property type="interactions" value="20"/>
</dbReference>
<dbReference type="STRING" id="4932.YMR254C"/>
<dbReference type="PaxDb" id="4932-YMR254C"/>
<dbReference type="PeptideAtlas" id="Q04838"/>
<dbReference type="EnsemblFungi" id="YMR254C_mRNA">
    <property type="protein sequence ID" value="YMR254C"/>
    <property type="gene ID" value="YMR254C"/>
</dbReference>
<dbReference type="GeneID" id="855296"/>
<dbReference type="AGR" id="SGD:S000004867"/>
<dbReference type="SGD" id="S000004867">
    <property type="gene designation" value="YMR254C"/>
</dbReference>
<dbReference type="HOGENOM" id="CLU_2279649_0_0_1"/>
<dbReference type="InParanoid" id="Q04838"/>
<dbReference type="PRO" id="PR:Q04838"/>
<dbReference type="Proteomes" id="UP000002311">
    <property type="component" value="Chromosome XIII"/>
</dbReference>
<dbReference type="RNAct" id="Q04838">
    <property type="molecule type" value="protein"/>
</dbReference>
<dbReference type="GO" id="GO:0016020">
    <property type="term" value="C:membrane"/>
    <property type="evidence" value="ECO:0007669"/>
    <property type="project" value="UniProtKB-SubCell"/>
</dbReference>
<organism>
    <name type="scientific">Saccharomyces cerevisiae (strain ATCC 204508 / S288c)</name>
    <name type="common">Baker's yeast</name>
    <dbReference type="NCBI Taxonomy" id="559292"/>
    <lineage>
        <taxon>Eukaryota</taxon>
        <taxon>Fungi</taxon>
        <taxon>Dikarya</taxon>
        <taxon>Ascomycota</taxon>
        <taxon>Saccharomycotina</taxon>
        <taxon>Saccharomycetes</taxon>
        <taxon>Saccharomycetales</taxon>
        <taxon>Saccharomycetaceae</taxon>
        <taxon>Saccharomyces</taxon>
    </lineage>
</organism>